<protein>
    <recommendedName>
        <fullName>Actin</fullName>
        <ecNumber evidence="1">3.6.4.-</ecNumber>
    </recommendedName>
</protein>
<reference key="1">
    <citation type="journal article" date="1990" name="Mol. Biochem. Parasitol.">
        <title>Cloning and sequencing of two actin genes from Taenia solium (Cestoda).</title>
        <authorList>
            <person name="Campos A."/>
            <person name="Bernard P."/>
            <person name="Fauconnier A."/>
            <person name="Landa A."/>
            <person name="Gomez E."/>
            <person name="Hernandez R."/>
            <person name="Willms K."/>
            <person name="Laclette J.P."/>
        </authorList>
    </citation>
    <scope>NUCLEOTIDE SEQUENCE [GENOMIC DNA]</scope>
</reference>
<feature type="chain" id="PRO_0000089033" description="Actin">
    <location>
        <begin position="1"/>
        <end position="376"/>
    </location>
</feature>
<proteinExistence type="inferred from homology"/>
<name>ACT_TAESO</name>
<keyword id="KW-0067">ATP-binding</keyword>
<keyword id="KW-0963">Cytoplasm</keyword>
<keyword id="KW-0206">Cytoskeleton</keyword>
<keyword id="KW-0378">Hydrolase</keyword>
<keyword id="KW-0547">Nucleotide-binding</keyword>
<accession>P68555</accession>
<accession>P14227</accession>
<accession>P38136</accession>
<dbReference type="EC" id="3.6.4.-" evidence="1"/>
<dbReference type="EMBL" id="M28996">
    <property type="protein sequence ID" value="AAA30092.1"/>
    <property type="molecule type" value="Genomic_DNA"/>
</dbReference>
<dbReference type="EMBL" id="M28997">
    <property type="protein sequence ID" value="AAA30093.1"/>
    <property type="molecule type" value="Genomic_DNA"/>
</dbReference>
<dbReference type="PIR" id="A44940">
    <property type="entry name" value="A44940"/>
</dbReference>
<dbReference type="SMR" id="P68555"/>
<dbReference type="GO" id="GO:0005737">
    <property type="term" value="C:cytoplasm"/>
    <property type="evidence" value="ECO:0007669"/>
    <property type="project" value="UniProtKB-KW"/>
</dbReference>
<dbReference type="GO" id="GO:0005856">
    <property type="term" value="C:cytoskeleton"/>
    <property type="evidence" value="ECO:0007669"/>
    <property type="project" value="UniProtKB-SubCell"/>
</dbReference>
<dbReference type="GO" id="GO:0005524">
    <property type="term" value="F:ATP binding"/>
    <property type="evidence" value="ECO:0007669"/>
    <property type="project" value="UniProtKB-KW"/>
</dbReference>
<dbReference type="GO" id="GO:0016787">
    <property type="term" value="F:hydrolase activity"/>
    <property type="evidence" value="ECO:0007669"/>
    <property type="project" value="UniProtKB-KW"/>
</dbReference>
<dbReference type="CDD" id="cd10224">
    <property type="entry name" value="ASKHA_NBD_actin"/>
    <property type="match status" value="1"/>
</dbReference>
<dbReference type="FunFam" id="2.30.36.70:FF:000001">
    <property type="entry name" value="Actin, alpha skeletal muscle"/>
    <property type="match status" value="1"/>
</dbReference>
<dbReference type="FunFam" id="3.30.420.40:FF:000131">
    <property type="entry name" value="Actin, alpha skeletal muscle"/>
    <property type="match status" value="1"/>
</dbReference>
<dbReference type="FunFam" id="3.30.420.40:FF:000291">
    <property type="entry name" value="Actin, alpha skeletal muscle"/>
    <property type="match status" value="1"/>
</dbReference>
<dbReference type="FunFam" id="3.90.640.10:FF:000047">
    <property type="entry name" value="Actin, alpha skeletal muscle"/>
    <property type="match status" value="1"/>
</dbReference>
<dbReference type="FunFam" id="3.30.420.40:FF:000058">
    <property type="entry name" value="Putative actin-related protein 5"/>
    <property type="match status" value="1"/>
</dbReference>
<dbReference type="Gene3D" id="3.30.420.40">
    <property type="match status" value="2"/>
</dbReference>
<dbReference type="Gene3D" id="3.90.640.10">
    <property type="entry name" value="Actin, Chain A, domain 4"/>
    <property type="match status" value="1"/>
</dbReference>
<dbReference type="InterPro" id="IPR004000">
    <property type="entry name" value="Actin"/>
</dbReference>
<dbReference type="InterPro" id="IPR020902">
    <property type="entry name" value="Actin/actin-like_CS"/>
</dbReference>
<dbReference type="InterPro" id="IPR004001">
    <property type="entry name" value="Actin_CS"/>
</dbReference>
<dbReference type="InterPro" id="IPR043129">
    <property type="entry name" value="ATPase_NBD"/>
</dbReference>
<dbReference type="PANTHER" id="PTHR11937">
    <property type="entry name" value="ACTIN"/>
    <property type="match status" value="1"/>
</dbReference>
<dbReference type="Pfam" id="PF00022">
    <property type="entry name" value="Actin"/>
    <property type="match status" value="1"/>
</dbReference>
<dbReference type="PRINTS" id="PR00190">
    <property type="entry name" value="ACTIN"/>
</dbReference>
<dbReference type="SMART" id="SM00268">
    <property type="entry name" value="ACTIN"/>
    <property type="match status" value="1"/>
</dbReference>
<dbReference type="SUPFAM" id="SSF53067">
    <property type="entry name" value="Actin-like ATPase domain"/>
    <property type="match status" value="2"/>
</dbReference>
<dbReference type="PROSITE" id="PS00406">
    <property type="entry name" value="ACTINS_1"/>
    <property type="match status" value="1"/>
</dbReference>
<dbReference type="PROSITE" id="PS00432">
    <property type="entry name" value="ACTINS_2"/>
    <property type="match status" value="1"/>
</dbReference>
<dbReference type="PROSITE" id="PS01132">
    <property type="entry name" value="ACTINS_ACT_LIKE"/>
    <property type="match status" value="1"/>
</dbReference>
<sequence length="376" mass="41745">MGDEEVQALVVDNGSGMCKAGFAGDDAPRAVFPSIVGRPRHQGVMVGMGQKDSYVGDEAQSKRGILTLKYPIEHGIVTNWDDMEKIWHHTFYNELRVAPEEHPVLLTEAPLNPKANREKMTQIMFETFNTPAMYVGIQAVLSLYASGRTTGIVLDSGDGVTHSVPIYEGYALPHAILRLDLAGRDLTDYLMKILTERGYSFTTTAEREIVRDIKEKLCYVALDFEQEMATAASSSSLEKSYELPDGQVITIGNERFRCPESLFQPSFLGMESAGIHESTFNAIMKCDVDIRKDLYANTVLSGGTTMYPGIADRMQKEITSLAPSTMKIKIVAPPERKYSVWIGGSILASLSTFQQMWISKQEYDESGPGIVHRKCF</sequence>
<comment type="function">
    <text>Actins are highly conserved proteins that are involved in various types of cell motility and are ubiquitously expressed in all eukaryotic cells.</text>
</comment>
<comment type="catalytic activity">
    <reaction evidence="1">
        <text>ATP + H2O = ADP + phosphate + H(+)</text>
        <dbReference type="Rhea" id="RHEA:13065"/>
        <dbReference type="ChEBI" id="CHEBI:15377"/>
        <dbReference type="ChEBI" id="CHEBI:15378"/>
        <dbReference type="ChEBI" id="CHEBI:30616"/>
        <dbReference type="ChEBI" id="CHEBI:43474"/>
        <dbReference type="ChEBI" id="CHEBI:456216"/>
    </reaction>
</comment>
<comment type="subcellular location">
    <subcellularLocation>
        <location>Cytoplasm</location>
        <location>Cytoskeleton</location>
    </subcellularLocation>
</comment>
<comment type="similarity">
    <text evidence="2">Belongs to the actin family.</text>
</comment>
<evidence type="ECO:0000250" key="1">
    <source>
        <dbReference type="UniProtKB" id="P68137"/>
    </source>
</evidence>
<evidence type="ECO:0000305" key="2"/>
<organism>
    <name type="scientific">Taenia solium</name>
    <name type="common">Pork tapeworm</name>
    <dbReference type="NCBI Taxonomy" id="6204"/>
    <lineage>
        <taxon>Eukaryota</taxon>
        <taxon>Metazoa</taxon>
        <taxon>Spiralia</taxon>
        <taxon>Lophotrochozoa</taxon>
        <taxon>Platyhelminthes</taxon>
        <taxon>Cestoda</taxon>
        <taxon>Eucestoda</taxon>
        <taxon>Cyclophyllidea</taxon>
        <taxon>Taeniidae</taxon>
        <taxon>Taenia</taxon>
    </lineage>
</organism>
<gene>
    <name type="primary">ACT1</name>
</gene>
<gene>
    <name type="primary">ACT2</name>
</gene>